<keyword id="KW-0046">Antibiotic resistance</keyword>
<keyword id="KW-0489">Methyltransferase</keyword>
<keyword id="KW-0949">S-adenosyl-L-methionine</keyword>
<keyword id="KW-0808">Transferase</keyword>
<protein>
    <recommendedName>
        <fullName>16S rRNA (adenine(1408)-N(1))-methyltransferase</fullName>
        <ecNumber>2.1.1.180</ecNumber>
    </recommendedName>
    <alternativeName>
        <fullName>16S rRNA m1A1408 methyltransferase</fullName>
    </alternativeName>
</protein>
<sequence>MRRVVGKRVLEFSEAEFDQLRSQYDEVVLDVGTGDGKHPYKVARQHPNQLVVALDADKTRMERMSAKAAAKPAKGGLPNLLYLWATAEKLPPLTGVGELHVLMPWGSLLRGILGSSPEMLRGLAAVCRPDAAFLVALNLHAWRPPVPEVGEHPEPTPETVDEGLAARYAQAGWQLTDCRYLAAEEVAALETSWTRRLNSSRDRFDVLALTGKINP</sequence>
<evidence type="ECO:0000250" key="1"/>
<evidence type="ECO:0000305" key="2"/>
<accession>Q2MEY3</accession>
<gene>
    <name type="primary">kamB</name>
    <name type="ORF">ShinN01.6</name>
</gene>
<reference key="1">
    <citation type="submission" date="2005-01" db="EMBL/GenBank/DDBJ databases">
        <title>Comparison of the 'mixed' gene clusters for the biosynthesis of the aminoglycoside antibiotics apramycin (Streptoalloteichus hindustanus DSM 44523 and Streptomyces tenebrarius DSM 40477) and hygromycin B (Streptomyces hygroscopicus subsp. hygroscopicus DSM 40578), which contain genes related to both the biosynthesis of other aminoglycosides and cell-wall sugars.</title>
        <authorList>
            <person name="Aboshanab K.M."/>
            <person name="Schmidt-Beissner H."/>
            <person name="Wehmeier U.F."/>
            <person name="Welzel K."/>
            <person name="Vente A."/>
            <person name="Piepersberg W."/>
        </authorList>
    </citation>
    <scope>NUCLEOTIDE SEQUENCE [GENOMIC DNA]</scope>
    <source>
        <strain>DSM 44523</strain>
    </source>
</reference>
<reference key="2">
    <citation type="journal article" date="2007" name="Cell Cycle">
        <title>Identification of a missing sequence and functionally important residues of 16S rRNA:m(1)A1408 methyltransferase KamB that causes bacterial resistance to aminoglycoside antibiotics.</title>
        <authorList>
            <person name="Koscinski L."/>
            <person name="Feder M."/>
            <person name="Bujnicki J.M."/>
        </authorList>
    </citation>
    <scope>3D-STRUCTURE MODELING</scope>
    <scope>IDENTIFICATION OF START SITE</scope>
</reference>
<feature type="chain" id="PRO_0000417016" description="16S rRNA (adenine(1408)-N(1))-methyltransferase">
    <location>
        <begin position="1"/>
        <end position="215"/>
    </location>
</feature>
<feature type="binding site" evidence="1">
    <location>
        <position position="32"/>
    </location>
    <ligand>
        <name>S-adenosyl-L-methionine</name>
        <dbReference type="ChEBI" id="CHEBI:59789"/>
    </ligand>
</feature>
<feature type="binding site" evidence="1">
    <location>
        <position position="55"/>
    </location>
    <ligand>
        <name>S-adenosyl-L-methionine</name>
        <dbReference type="ChEBI" id="CHEBI:59789"/>
    </ligand>
</feature>
<feature type="binding site" evidence="1">
    <location>
        <begin position="87"/>
        <end position="88"/>
    </location>
    <ligand>
        <name>S-adenosyl-L-methionine</name>
        <dbReference type="ChEBI" id="CHEBI:59789"/>
    </ligand>
</feature>
<feature type="binding site" evidence="1">
    <location>
        <begin position="102"/>
        <end position="107"/>
    </location>
    <ligand>
        <name>S-adenosyl-L-methionine</name>
        <dbReference type="ChEBI" id="CHEBI:59789"/>
    </ligand>
</feature>
<feature type="binding site" evidence="1">
    <location>
        <begin position="191"/>
        <end position="193"/>
    </location>
    <ligand>
        <name>S-adenosyl-L-methionine</name>
        <dbReference type="ChEBI" id="CHEBI:59789"/>
    </ligand>
</feature>
<comment type="function">
    <text evidence="1">Specifically methylates the N(1) position of adenine 1408 in 16S rRNA. Confers resistance to various aminoglycosides (By similarity).</text>
</comment>
<comment type="catalytic activity">
    <reaction>
        <text>adenosine(1408) in 16S rRNA + S-adenosyl-L-methionine = N(1)-methyladenosine(1408) in 16S rRNA + S-adenosyl-L-homocysteine + H(+)</text>
        <dbReference type="Rhea" id="RHEA:42776"/>
        <dbReference type="Rhea" id="RHEA-COMP:10227"/>
        <dbReference type="Rhea" id="RHEA-COMP:10228"/>
        <dbReference type="ChEBI" id="CHEBI:15378"/>
        <dbReference type="ChEBI" id="CHEBI:57856"/>
        <dbReference type="ChEBI" id="CHEBI:59789"/>
        <dbReference type="ChEBI" id="CHEBI:74411"/>
        <dbReference type="ChEBI" id="CHEBI:74491"/>
        <dbReference type="EC" id="2.1.1.180"/>
    </reaction>
</comment>
<comment type="miscellaneous">
    <text>Protects S.hindustanus, which is an antibiotic-producing bacterium, against self-intoxication.</text>
</comment>
<comment type="similarity">
    <text evidence="2">Belongs to the methyltransferase superfamily. Kanamycin-apramycin resistance family.</text>
</comment>
<comment type="sequence caution" evidence="2">
    <conflict type="erroneous initiation">
        <sequence resource="EMBL-CDS" id="CAI47641"/>
    </conflict>
    <text>Truncated N-terminus.</text>
</comment>
<proteinExistence type="inferred from homology"/>
<dbReference type="EC" id="2.1.1.180"/>
<dbReference type="EMBL" id="AJ875019">
    <property type="protein sequence ID" value="CAI47641.1"/>
    <property type="status" value="ALT_INIT"/>
    <property type="molecule type" value="Genomic_DNA"/>
</dbReference>
<dbReference type="RefSeq" id="WP_063964001.1">
    <property type="nucleotide sequence ID" value="NG_050562.1"/>
</dbReference>
<dbReference type="SMR" id="Q2MEY3"/>
<dbReference type="STRING" id="2017.SAMN05444320_108263"/>
<dbReference type="OrthoDB" id="5505369at2"/>
<dbReference type="BRENDA" id="2.1.1.180">
    <property type="organism ID" value="11472"/>
</dbReference>
<dbReference type="GO" id="GO:0008168">
    <property type="term" value="F:methyltransferase activity"/>
    <property type="evidence" value="ECO:0007669"/>
    <property type="project" value="UniProtKB-KW"/>
</dbReference>
<dbReference type="GO" id="GO:0032259">
    <property type="term" value="P:methylation"/>
    <property type="evidence" value="ECO:0007669"/>
    <property type="project" value="UniProtKB-KW"/>
</dbReference>
<dbReference type="GO" id="GO:0046677">
    <property type="term" value="P:response to antibiotic"/>
    <property type="evidence" value="ECO:0007669"/>
    <property type="project" value="UniProtKB-KW"/>
</dbReference>
<dbReference type="Gene3D" id="3.40.50.150">
    <property type="entry name" value="Vaccinia Virus protein VP39"/>
    <property type="match status" value="1"/>
</dbReference>
<dbReference type="InterPro" id="IPR056262">
    <property type="entry name" value="NpmA"/>
</dbReference>
<dbReference type="InterPro" id="IPR029063">
    <property type="entry name" value="SAM-dependent_MTases_sf"/>
</dbReference>
<dbReference type="NCBIfam" id="NF000363">
    <property type="entry name" value="self_KamB"/>
    <property type="match status" value="1"/>
</dbReference>
<dbReference type="Pfam" id="PF24675">
    <property type="entry name" value="NpmA"/>
    <property type="match status" value="1"/>
</dbReference>
<dbReference type="SUPFAM" id="SSF53335">
    <property type="entry name" value="S-adenosyl-L-methionine-dependent methyltransferases"/>
    <property type="match status" value="1"/>
</dbReference>
<organism>
    <name type="scientific">Streptoalloteichus hindustanus</name>
    <dbReference type="NCBI Taxonomy" id="2017"/>
    <lineage>
        <taxon>Bacteria</taxon>
        <taxon>Bacillati</taxon>
        <taxon>Actinomycetota</taxon>
        <taxon>Actinomycetes</taxon>
        <taxon>Pseudonocardiales</taxon>
        <taxon>Pseudonocardiaceae</taxon>
        <taxon>Streptoalloteichus</taxon>
    </lineage>
</organism>
<name>KAMB_STRHI</name>